<feature type="chain" id="PRO_0000405574" description="Zinc finger protein STOP1 homolog">
    <location>
        <begin position="1"/>
        <end position="522"/>
    </location>
</feature>
<feature type="zinc finger region" description="C2H2-type 1" evidence="2">
    <location>
        <begin position="282"/>
        <end position="304"/>
    </location>
</feature>
<feature type="zinc finger region" description="C2H2-type 2; atypical" evidence="2">
    <location>
        <begin position="390"/>
        <end position="421"/>
    </location>
</feature>
<feature type="region of interest" description="Disordered" evidence="3">
    <location>
        <begin position="1"/>
        <end position="43"/>
    </location>
</feature>
<feature type="region of interest" description="Disordered" evidence="3">
    <location>
        <begin position="234"/>
        <end position="260"/>
    </location>
</feature>
<feature type="compositionally biased region" description="Polar residues" evidence="3">
    <location>
        <begin position="1"/>
        <end position="12"/>
    </location>
</feature>
<feature type="compositionally biased region" description="Polar residues" evidence="3">
    <location>
        <begin position="19"/>
        <end position="40"/>
    </location>
</feature>
<feature type="compositionally biased region" description="Basic and acidic residues" evidence="3">
    <location>
        <begin position="244"/>
        <end position="260"/>
    </location>
</feature>
<evidence type="ECO:0000250" key="1"/>
<evidence type="ECO:0000255" key="2">
    <source>
        <dbReference type="PROSITE-ProRule" id="PRU00042"/>
    </source>
</evidence>
<evidence type="ECO:0000256" key="3">
    <source>
        <dbReference type="SAM" id="MobiDB-lite"/>
    </source>
</evidence>
<evidence type="ECO:0000305" key="4"/>
<accession>Q943I6</accession>
<accession>A0A0P0VAW2</accession>
<comment type="function">
    <text evidence="1">Probable transcription factor that may be involved in aluminum tolerance.</text>
</comment>
<comment type="subcellular location">
    <subcellularLocation>
        <location evidence="4">Nucleus</location>
    </subcellularLocation>
</comment>
<proteinExistence type="evidence at transcript level"/>
<dbReference type="EMBL" id="AP003235">
    <property type="protein sequence ID" value="BAB64114.1"/>
    <property type="molecule type" value="Genomic_DNA"/>
</dbReference>
<dbReference type="EMBL" id="AP003566">
    <property type="protein sequence ID" value="BAB86538.1"/>
    <property type="molecule type" value="Genomic_DNA"/>
</dbReference>
<dbReference type="EMBL" id="AP008207">
    <property type="protein sequence ID" value="BAF06849.1"/>
    <property type="molecule type" value="Genomic_DNA"/>
</dbReference>
<dbReference type="EMBL" id="AP014957">
    <property type="protein sequence ID" value="BAS75445.1"/>
    <property type="molecule type" value="Genomic_DNA"/>
</dbReference>
<dbReference type="EMBL" id="CM000138">
    <property type="protein sequence ID" value="EEE55740.1"/>
    <property type="molecule type" value="Genomic_DNA"/>
</dbReference>
<dbReference type="EMBL" id="AK072211">
    <property type="protein sequence ID" value="BAG92873.1"/>
    <property type="molecule type" value="mRNA"/>
</dbReference>
<dbReference type="EMBL" id="AK100840">
    <property type="protein sequence ID" value="BAG94792.1"/>
    <property type="molecule type" value="mRNA"/>
</dbReference>
<dbReference type="RefSeq" id="XP_015641300.1">
    <property type="nucleotide sequence ID" value="XM_015785814.1"/>
</dbReference>
<dbReference type="RefSeq" id="XP_015641307.1">
    <property type="nucleotide sequence ID" value="XM_015785821.1"/>
</dbReference>
<dbReference type="FunCoup" id="Q943I6">
    <property type="interactions" value="2042"/>
</dbReference>
<dbReference type="STRING" id="39947.Q943I6"/>
<dbReference type="PaxDb" id="39947-Q943I6"/>
<dbReference type="EnsemblPlants" id="Os01t0871200-01">
    <property type="protein sequence ID" value="Os01t0871200-01"/>
    <property type="gene ID" value="Os01g0871200"/>
</dbReference>
<dbReference type="EnsemblPlants" id="Os01t0871200-02">
    <property type="protein sequence ID" value="Os01t0871200-02"/>
    <property type="gene ID" value="Os01g0871200"/>
</dbReference>
<dbReference type="EnsemblPlants" id="Os01t0871200-03">
    <property type="protein sequence ID" value="Os01t0871200-03"/>
    <property type="gene ID" value="Os01g0871200"/>
</dbReference>
<dbReference type="EnsemblPlants" id="Os01t0871200-04">
    <property type="protein sequence ID" value="Os01t0871200-04"/>
    <property type="gene ID" value="Os01g0871200"/>
</dbReference>
<dbReference type="GeneID" id="4324940"/>
<dbReference type="Gramene" id="Os01t0871200-01">
    <property type="protein sequence ID" value="Os01t0871200-01"/>
    <property type="gene ID" value="Os01g0871200"/>
</dbReference>
<dbReference type="Gramene" id="Os01t0871200-02">
    <property type="protein sequence ID" value="Os01t0871200-02"/>
    <property type="gene ID" value="Os01g0871200"/>
</dbReference>
<dbReference type="Gramene" id="Os01t0871200-03">
    <property type="protein sequence ID" value="Os01t0871200-03"/>
    <property type="gene ID" value="Os01g0871200"/>
</dbReference>
<dbReference type="Gramene" id="Os01t0871200-04">
    <property type="protein sequence ID" value="Os01t0871200-04"/>
    <property type="gene ID" value="Os01g0871200"/>
</dbReference>
<dbReference type="KEGG" id="dosa:Os01g0871200"/>
<dbReference type="KEGG" id="osa:4324940"/>
<dbReference type="eggNOG" id="KOG1721">
    <property type="taxonomic scope" value="Eukaryota"/>
</dbReference>
<dbReference type="HOGENOM" id="CLU_029078_0_0_1"/>
<dbReference type="InParanoid" id="Q943I6"/>
<dbReference type="OMA" id="NTLCAPM"/>
<dbReference type="OrthoDB" id="6591996at2759"/>
<dbReference type="Proteomes" id="UP000000763">
    <property type="component" value="Chromosome 1"/>
</dbReference>
<dbReference type="Proteomes" id="UP000007752">
    <property type="component" value="Chromosome 1"/>
</dbReference>
<dbReference type="Proteomes" id="UP000059680">
    <property type="component" value="Chromosome 1"/>
</dbReference>
<dbReference type="GO" id="GO:0005634">
    <property type="term" value="C:nucleus"/>
    <property type="evidence" value="ECO:0000305"/>
    <property type="project" value="Gramene"/>
</dbReference>
<dbReference type="GO" id="GO:0008270">
    <property type="term" value="F:zinc ion binding"/>
    <property type="evidence" value="ECO:0007669"/>
    <property type="project" value="UniProtKB-KW"/>
</dbReference>
<dbReference type="GO" id="GO:0006355">
    <property type="term" value="P:regulation of DNA-templated transcription"/>
    <property type="evidence" value="ECO:0000305"/>
    <property type="project" value="Gramene"/>
</dbReference>
<dbReference type="GO" id="GO:0010447">
    <property type="term" value="P:response to acidic pH"/>
    <property type="evidence" value="ECO:0007669"/>
    <property type="project" value="InterPro"/>
</dbReference>
<dbReference type="GO" id="GO:0010044">
    <property type="term" value="P:response to aluminum ion"/>
    <property type="evidence" value="ECO:0007669"/>
    <property type="project" value="InterPro"/>
</dbReference>
<dbReference type="Gene3D" id="3.30.160.60">
    <property type="entry name" value="Classic Zinc Finger"/>
    <property type="match status" value="1"/>
</dbReference>
<dbReference type="InterPro" id="IPR044300">
    <property type="entry name" value="STOP1/2"/>
</dbReference>
<dbReference type="InterPro" id="IPR036236">
    <property type="entry name" value="Znf_C2H2_sf"/>
</dbReference>
<dbReference type="InterPro" id="IPR013087">
    <property type="entry name" value="Znf_C2H2_type"/>
</dbReference>
<dbReference type="PANTHER" id="PTHR46352">
    <property type="entry name" value="PROTEIN SENSITIVE TO PROTON RHIZOTOXICITY 1"/>
    <property type="match status" value="1"/>
</dbReference>
<dbReference type="PANTHER" id="PTHR46352:SF1">
    <property type="entry name" value="PROTEIN SENSITIVE TO PROTON RHIZOTOXICITY 1"/>
    <property type="match status" value="1"/>
</dbReference>
<dbReference type="Pfam" id="PF23115">
    <property type="entry name" value="zf-C2H2_STOP2_3rd"/>
    <property type="match status" value="1"/>
</dbReference>
<dbReference type="Pfam" id="PF23118">
    <property type="entry name" value="zf-C2H2_STOP2_C"/>
    <property type="match status" value="1"/>
</dbReference>
<dbReference type="SMART" id="SM00355">
    <property type="entry name" value="ZnF_C2H2"/>
    <property type="match status" value="3"/>
</dbReference>
<dbReference type="SUPFAM" id="SSF57667">
    <property type="entry name" value="beta-beta-alpha zinc fingers"/>
    <property type="match status" value="1"/>
</dbReference>
<dbReference type="PROSITE" id="PS00028">
    <property type="entry name" value="ZINC_FINGER_C2H2_1"/>
    <property type="match status" value="1"/>
</dbReference>
<dbReference type="PROSITE" id="PS50157">
    <property type="entry name" value="ZINC_FINGER_C2H2_2"/>
    <property type="match status" value="1"/>
</dbReference>
<organism>
    <name type="scientific">Oryza sativa subsp. japonica</name>
    <name type="common">Rice</name>
    <dbReference type="NCBI Taxonomy" id="39947"/>
    <lineage>
        <taxon>Eukaryota</taxon>
        <taxon>Viridiplantae</taxon>
        <taxon>Streptophyta</taxon>
        <taxon>Embryophyta</taxon>
        <taxon>Tracheophyta</taxon>
        <taxon>Spermatophyta</taxon>
        <taxon>Magnoliopsida</taxon>
        <taxon>Liliopsida</taxon>
        <taxon>Poales</taxon>
        <taxon>Poaceae</taxon>
        <taxon>BOP clade</taxon>
        <taxon>Oryzoideae</taxon>
        <taxon>Oryzeae</taxon>
        <taxon>Oryzinae</taxon>
        <taxon>Oryza</taxon>
        <taxon>Oryza sativa</taxon>
    </lineage>
</organism>
<keyword id="KW-0479">Metal-binding</keyword>
<keyword id="KW-0539">Nucleus</keyword>
<keyword id="KW-1185">Reference proteome</keyword>
<keyword id="KW-0677">Repeat</keyword>
<keyword id="KW-0804">Transcription</keyword>
<keyword id="KW-0805">Transcription regulation</keyword>
<keyword id="KW-0862">Zinc</keyword>
<keyword id="KW-0863">Zinc-finger</keyword>
<protein>
    <recommendedName>
        <fullName>Zinc finger protein STOP1 homolog</fullName>
    </recommendedName>
    <alternativeName>
        <fullName>Protein STOP1 homolog</fullName>
    </alternativeName>
</protein>
<gene>
    <name type="ordered locus">Os01g0871200</name>
    <name type="ordered locus">LOC_Os01g65080</name>
    <name type="ORF">OsJ_04239</name>
    <name type="ORF">OSJNBb0008G24.8</name>
    <name type="ORF">P0039A07.24-1</name>
</gene>
<reference key="1">
    <citation type="journal article" date="2002" name="Nature">
        <title>The genome sequence and structure of rice chromosome 1.</title>
        <authorList>
            <person name="Sasaki T."/>
            <person name="Matsumoto T."/>
            <person name="Yamamoto K."/>
            <person name="Sakata K."/>
            <person name="Baba T."/>
            <person name="Katayose Y."/>
            <person name="Wu J."/>
            <person name="Niimura Y."/>
            <person name="Cheng Z."/>
            <person name="Nagamura Y."/>
            <person name="Antonio B.A."/>
            <person name="Kanamori H."/>
            <person name="Hosokawa S."/>
            <person name="Masukawa M."/>
            <person name="Arikawa K."/>
            <person name="Chiden Y."/>
            <person name="Hayashi M."/>
            <person name="Okamoto M."/>
            <person name="Ando T."/>
            <person name="Aoki H."/>
            <person name="Arita K."/>
            <person name="Hamada M."/>
            <person name="Harada C."/>
            <person name="Hijishita S."/>
            <person name="Honda M."/>
            <person name="Ichikawa Y."/>
            <person name="Idonuma A."/>
            <person name="Iijima M."/>
            <person name="Ikeda M."/>
            <person name="Ikeno M."/>
            <person name="Ito S."/>
            <person name="Ito T."/>
            <person name="Ito Y."/>
            <person name="Ito Y."/>
            <person name="Iwabuchi A."/>
            <person name="Kamiya K."/>
            <person name="Karasawa W."/>
            <person name="Katagiri S."/>
            <person name="Kikuta A."/>
            <person name="Kobayashi N."/>
            <person name="Kono I."/>
            <person name="Machita K."/>
            <person name="Maehara T."/>
            <person name="Mizuno H."/>
            <person name="Mizubayashi T."/>
            <person name="Mukai Y."/>
            <person name="Nagasaki H."/>
            <person name="Nakashima M."/>
            <person name="Nakama Y."/>
            <person name="Nakamichi Y."/>
            <person name="Nakamura M."/>
            <person name="Namiki N."/>
            <person name="Negishi M."/>
            <person name="Ohta I."/>
            <person name="Ono N."/>
            <person name="Saji S."/>
            <person name="Sakai K."/>
            <person name="Shibata M."/>
            <person name="Shimokawa T."/>
            <person name="Shomura A."/>
            <person name="Song J."/>
            <person name="Takazaki Y."/>
            <person name="Terasawa K."/>
            <person name="Tsuji K."/>
            <person name="Waki K."/>
            <person name="Yamagata H."/>
            <person name="Yamane H."/>
            <person name="Yoshiki S."/>
            <person name="Yoshihara R."/>
            <person name="Yukawa K."/>
            <person name="Zhong H."/>
            <person name="Iwama H."/>
            <person name="Endo T."/>
            <person name="Ito H."/>
            <person name="Hahn J.H."/>
            <person name="Kim H.-I."/>
            <person name="Eun M.-Y."/>
            <person name="Yano M."/>
            <person name="Jiang J."/>
            <person name="Gojobori T."/>
        </authorList>
    </citation>
    <scope>NUCLEOTIDE SEQUENCE [LARGE SCALE GENOMIC DNA]</scope>
    <source>
        <strain>cv. Nipponbare</strain>
    </source>
</reference>
<reference key="2">
    <citation type="journal article" date="2005" name="Nature">
        <title>The map-based sequence of the rice genome.</title>
        <authorList>
            <consortium name="International rice genome sequencing project (IRGSP)"/>
        </authorList>
    </citation>
    <scope>NUCLEOTIDE SEQUENCE [LARGE SCALE GENOMIC DNA]</scope>
    <source>
        <strain>cv. Nipponbare</strain>
    </source>
</reference>
<reference key="3">
    <citation type="journal article" date="2008" name="Nucleic Acids Res.">
        <title>The rice annotation project database (RAP-DB): 2008 update.</title>
        <authorList>
            <consortium name="The rice annotation project (RAP)"/>
        </authorList>
    </citation>
    <scope>GENOME REANNOTATION</scope>
    <source>
        <strain>cv. Nipponbare</strain>
    </source>
</reference>
<reference key="4">
    <citation type="journal article" date="2013" name="Rice">
        <title>Improvement of the Oryza sativa Nipponbare reference genome using next generation sequence and optical map data.</title>
        <authorList>
            <person name="Kawahara Y."/>
            <person name="de la Bastide M."/>
            <person name="Hamilton J.P."/>
            <person name="Kanamori H."/>
            <person name="McCombie W.R."/>
            <person name="Ouyang S."/>
            <person name="Schwartz D.C."/>
            <person name="Tanaka T."/>
            <person name="Wu J."/>
            <person name="Zhou S."/>
            <person name="Childs K.L."/>
            <person name="Davidson R.M."/>
            <person name="Lin H."/>
            <person name="Quesada-Ocampo L."/>
            <person name="Vaillancourt B."/>
            <person name="Sakai H."/>
            <person name="Lee S.S."/>
            <person name="Kim J."/>
            <person name="Numa H."/>
            <person name="Itoh T."/>
            <person name="Buell C.R."/>
            <person name="Matsumoto T."/>
        </authorList>
    </citation>
    <scope>GENOME REANNOTATION</scope>
    <source>
        <strain>cv. Nipponbare</strain>
    </source>
</reference>
<reference key="5">
    <citation type="journal article" date="2005" name="PLoS Biol.">
        <title>The genomes of Oryza sativa: a history of duplications.</title>
        <authorList>
            <person name="Yu J."/>
            <person name="Wang J."/>
            <person name="Lin W."/>
            <person name="Li S."/>
            <person name="Li H."/>
            <person name="Zhou J."/>
            <person name="Ni P."/>
            <person name="Dong W."/>
            <person name="Hu S."/>
            <person name="Zeng C."/>
            <person name="Zhang J."/>
            <person name="Zhang Y."/>
            <person name="Li R."/>
            <person name="Xu Z."/>
            <person name="Li S."/>
            <person name="Li X."/>
            <person name="Zheng H."/>
            <person name="Cong L."/>
            <person name="Lin L."/>
            <person name="Yin J."/>
            <person name="Geng J."/>
            <person name="Li G."/>
            <person name="Shi J."/>
            <person name="Liu J."/>
            <person name="Lv H."/>
            <person name="Li J."/>
            <person name="Wang J."/>
            <person name="Deng Y."/>
            <person name="Ran L."/>
            <person name="Shi X."/>
            <person name="Wang X."/>
            <person name="Wu Q."/>
            <person name="Li C."/>
            <person name="Ren X."/>
            <person name="Wang J."/>
            <person name="Wang X."/>
            <person name="Li D."/>
            <person name="Liu D."/>
            <person name="Zhang X."/>
            <person name="Ji Z."/>
            <person name="Zhao W."/>
            <person name="Sun Y."/>
            <person name="Zhang Z."/>
            <person name="Bao J."/>
            <person name="Han Y."/>
            <person name="Dong L."/>
            <person name="Ji J."/>
            <person name="Chen P."/>
            <person name="Wu S."/>
            <person name="Liu J."/>
            <person name="Xiao Y."/>
            <person name="Bu D."/>
            <person name="Tan J."/>
            <person name="Yang L."/>
            <person name="Ye C."/>
            <person name="Zhang J."/>
            <person name="Xu J."/>
            <person name="Zhou Y."/>
            <person name="Yu Y."/>
            <person name="Zhang B."/>
            <person name="Zhuang S."/>
            <person name="Wei H."/>
            <person name="Liu B."/>
            <person name="Lei M."/>
            <person name="Yu H."/>
            <person name="Li Y."/>
            <person name="Xu H."/>
            <person name="Wei S."/>
            <person name="He X."/>
            <person name="Fang L."/>
            <person name="Zhang Z."/>
            <person name="Zhang Y."/>
            <person name="Huang X."/>
            <person name="Su Z."/>
            <person name="Tong W."/>
            <person name="Li J."/>
            <person name="Tong Z."/>
            <person name="Li S."/>
            <person name="Ye J."/>
            <person name="Wang L."/>
            <person name="Fang L."/>
            <person name="Lei T."/>
            <person name="Chen C.-S."/>
            <person name="Chen H.-C."/>
            <person name="Xu Z."/>
            <person name="Li H."/>
            <person name="Huang H."/>
            <person name="Zhang F."/>
            <person name="Xu H."/>
            <person name="Li N."/>
            <person name="Zhao C."/>
            <person name="Li S."/>
            <person name="Dong L."/>
            <person name="Huang Y."/>
            <person name="Li L."/>
            <person name="Xi Y."/>
            <person name="Qi Q."/>
            <person name="Li W."/>
            <person name="Zhang B."/>
            <person name="Hu W."/>
            <person name="Zhang Y."/>
            <person name="Tian X."/>
            <person name="Jiao Y."/>
            <person name="Liang X."/>
            <person name="Jin J."/>
            <person name="Gao L."/>
            <person name="Zheng W."/>
            <person name="Hao B."/>
            <person name="Liu S.-M."/>
            <person name="Wang W."/>
            <person name="Yuan L."/>
            <person name="Cao M."/>
            <person name="McDermott J."/>
            <person name="Samudrala R."/>
            <person name="Wang J."/>
            <person name="Wong G.K.-S."/>
            <person name="Yang H."/>
        </authorList>
    </citation>
    <scope>NUCLEOTIDE SEQUENCE [LARGE SCALE GENOMIC DNA]</scope>
    <source>
        <strain>cv. Nipponbare</strain>
    </source>
</reference>
<reference key="6">
    <citation type="journal article" date="2003" name="Science">
        <title>Collection, mapping, and annotation of over 28,000 cDNA clones from japonica rice.</title>
        <authorList>
            <consortium name="The rice full-length cDNA consortium"/>
        </authorList>
    </citation>
    <scope>NUCLEOTIDE SEQUENCE [LARGE SCALE MRNA]</scope>
    <source>
        <strain>cv. Nipponbare</strain>
    </source>
</reference>
<sequence>MDSGLGRSSETSLKALPSMASNATRNTDPDQQGVRFSSMDQPPCFARPGQSFPAFPPLFGVQSSSLYLPDDIEAKIGNQFESNPSPNNPTMDWDPQAMLSNLSFLEQKIKQVKDIVQSMSNRESQVAGGSSEAQAKQQLVTADLTCIIIQLISTAGSLLPSMKNPISSNPALRHLSNTLCAPMILGTNCNLRPSANDEATIPDISKTHDYEELMNSLNTTQAESDEMMNCQNPCGGEGSEPIPMEDHDVKESDDGGERENLPPGSYVVLQLEKEEILAPHTHFCLICGKGFKRDANLRMHMRGHGDEYKTAAALAKPSKDSSLESAPVTRYSCPYVGCKRNKEHKKFQPLKTILCVKNHYKRSHCDKSYTCSRCNTKKFSVIADLKTHEKHCGRDKWLCSCGTTFSRKDKLFGHVALFQGHTPALPMDDIKVTGASEQPQGSEAMNTMVGSAGYNFPGSSSDDIPNLDMKMADDPRYFSPLSFDPCFGGLDDFTRPGFDISENPFSFLPSGSCSFGQQNGDS</sequence>
<name>STOP1_ORYSJ</name>